<comment type="subcellular location">
    <subcellularLocation>
        <location evidence="4">Membrane</location>
        <topology evidence="4">Single-pass membrane protein</topology>
    </subcellularLocation>
</comment>
<comment type="similarity">
    <text evidence="4">Belongs to the formin-like family. Class-I subfamily.</text>
</comment>
<accession>Q8H8K7</accession>
<name>FH4_ORYSJ</name>
<reference key="1">
    <citation type="journal article" date="2003" name="Science">
        <title>In-depth view of structure, activity, and evolution of rice chromosome 10.</title>
        <authorList>
            <person name="Yu Y."/>
            <person name="Rambo T."/>
            <person name="Currie J."/>
            <person name="Saski C."/>
            <person name="Kim H.-R."/>
            <person name="Collura K."/>
            <person name="Thompson S."/>
            <person name="Simmons J."/>
            <person name="Yang T.-J."/>
            <person name="Nah G."/>
            <person name="Patel A.J."/>
            <person name="Thurmond S."/>
            <person name="Henry D."/>
            <person name="Oates R."/>
            <person name="Palmer M."/>
            <person name="Pries G."/>
            <person name="Gibson J."/>
            <person name="Anderson H."/>
            <person name="Paradkar M."/>
            <person name="Crane L."/>
            <person name="Dale J."/>
            <person name="Carver M.B."/>
            <person name="Wood T."/>
            <person name="Frisch D."/>
            <person name="Engler F."/>
            <person name="Soderlund C."/>
            <person name="Palmer L.E."/>
            <person name="Teytelman L."/>
            <person name="Nascimento L."/>
            <person name="De la Bastide M."/>
            <person name="Spiegel L."/>
            <person name="Ware D."/>
            <person name="O'Shaughnessy A."/>
            <person name="Dike S."/>
            <person name="Dedhia N."/>
            <person name="Preston R."/>
            <person name="Huang E."/>
            <person name="Ferraro K."/>
            <person name="Kuit K."/>
            <person name="Miller B."/>
            <person name="Zutavern T."/>
            <person name="Katzenberger F."/>
            <person name="Muller S."/>
            <person name="Balija V."/>
            <person name="Martienssen R.A."/>
            <person name="Stein L."/>
            <person name="Minx P."/>
            <person name="Johnson D."/>
            <person name="Cordum H."/>
            <person name="Mardis E."/>
            <person name="Cheng Z."/>
            <person name="Jiang J."/>
            <person name="Wilson R."/>
            <person name="McCombie W.R."/>
            <person name="Wing R.A."/>
            <person name="Yuan Q."/>
            <person name="Ouyang S."/>
            <person name="Liu J."/>
            <person name="Jones K.M."/>
            <person name="Gansberger K."/>
            <person name="Moffat K."/>
            <person name="Hill J."/>
            <person name="Tsitrin T."/>
            <person name="Overton L."/>
            <person name="Bera J."/>
            <person name="Kim M."/>
            <person name="Jin S."/>
            <person name="Tallon L."/>
            <person name="Ciecko A."/>
            <person name="Pai G."/>
            <person name="Van Aken S."/>
            <person name="Utterback T."/>
            <person name="Reidmuller S."/>
            <person name="Bormann J."/>
            <person name="Feldblyum T."/>
            <person name="Hsiao J."/>
            <person name="Zismann V."/>
            <person name="Blunt S."/>
            <person name="de Vazeille A.R."/>
            <person name="Shaffer T."/>
            <person name="Koo H."/>
            <person name="Suh B."/>
            <person name="Yang Q."/>
            <person name="Haas B."/>
            <person name="Peterson J."/>
            <person name="Pertea M."/>
            <person name="Volfovsky N."/>
            <person name="Wortman J."/>
            <person name="White O."/>
            <person name="Salzberg S.L."/>
            <person name="Fraser C.M."/>
            <person name="Buell C.R."/>
            <person name="Messing J."/>
            <person name="Song R."/>
            <person name="Fuks G."/>
            <person name="Llaca V."/>
            <person name="Kovchak S."/>
            <person name="Young S."/>
            <person name="Bowers J.E."/>
            <person name="Paterson A.H."/>
            <person name="Johns M.A."/>
            <person name="Mao L."/>
            <person name="Pan H."/>
            <person name="Dean R.A."/>
        </authorList>
    </citation>
    <scope>NUCLEOTIDE SEQUENCE [LARGE SCALE GENOMIC DNA]</scope>
    <source>
        <strain>cv. Nipponbare</strain>
    </source>
</reference>
<reference key="2">
    <citation type="journal article" date="2005" name="Nature">
        <title>The map-based sequence of the rice genome.</title>
        <authorList>
            <consortium name="International rice genome sequencing project (IRGSP)"/>
        </authorList>
    </citation>
    <scope>NUCLEOTIDE SEQUENCE [LARGE SCALE GENOMIC DNA]</scope>
    <source>
        <strain>cv. Nipponbare</strain>
    </source>
</reference>
<reference key="3">
    <citation type="journal article" date="2008" name="Nucleic Acids Res.">
        <title>The rice annotation project database (RAP-DB): 2008 update.</title>
        <authorList>
            <consortium name="The rice annotation project (RAP)"/>
        </authorList>
    </citation>
    <scope>GENOME REANNOTATION</scope>
    <source>
        <strain>cv. Nipponbare</strain>
    </source>
</reference>
<reference key="4">
    <citation type="journal article" date="2013" name="Rice">
        <title>Improvement of the Oryza sativa Nipponbare reference genome using next generation sequence and optical map data.</title>
        <authorList>
            <person name="Kawahara Y."/>
            <person name="de la Bastide M."/>
            <person name="Hamilton J.P."/>
            <person name="Kanamori H."/>
            <person name="McCombie W.R."/>
            <person name="Ouyang S."/>
            <person name="Schwartz D.C."/>
            <person name="Tanaka T."/>
            <person name="Wu J."/>
            <person name="Zhou S."/>
            <person name="Childs K.L."/>
            <person name="Davidson R.M."/>
            <person name="Lin H."/>
            <person name="Quesada-Ocampo L."/>
            <person name="Vaillancourt B."/>
            <person name="Sakai H."/>
            <person name="Lee S.S."/>
            <person name="Kim J."/>
            <person name="Numa H."/>
            <person name="Itoh T."/>
            <person name="Buell C.R."/>
            <person name="Matsumoto T."/>
        </authorList>
    </citation>
    <scope>GENOME REANNOTATION</scope>
    <source>
        <strain>cv. Nipponbare</strain>
    </source>
</reference>
<reference key="5">
    <citation type="journal article" date="2004" name="BMC Genomics">
        <title>Formin homology 2 domains occur in multiple contexts in angiosperms.</title>
        <authorList>
            <person name="Cvrckova F."/>
            <person name="Novotny M."/>
            <person name="Pickova D."/>
            <person name="Zarsky V."/>
        </authorList>
    </citation>
    <scope>GENE FAMILY</scope>
    <scope>NOMENCLATURE</scope>
</reference>
<keyword id="KW-0472">Membrane</keyword>
<keyword id="KW-1185">Reference proteome</keyword>
<keyword id="KW-0732">Signal</keyword>
<keyword id="KW-0812">Transmembrane</keyword>
<keyword id="KW-1133">Transmembrane helix</keyword>
<sequence length="849" mass="90281">MPPTLALLLFLALSAVAAVGGAGDVRRVLHEPLFPIEWTPPPSTASPSPPSPDFSSDPSTPATPVDNGGPALLPPPPPNTVAADVSSSRSGPDPRARGGGGGGTPKAAIVVASAAAAAVLALLAFAAAFLLTGRLARHPAAAAAQAHKPPGHAHAGAGSVAGAHADVAGCSTAVSPYRKVRPERARRGMCRDVDTVPSPELRPLPPLRRGASALTQGSSDEDAAYYTPGQRSAGSGGGGGGEGGGTWSEASASSPRTTTASRRSLPSLTSDFFPTTPAAAPVPAPAAAAPPPAPPAPRSRRTPPRTRFSAGSGAEMNKQMASPPSNPPPAPPPPPPPPSRFNNTTPKPPPPPPPPEPPTGPVSARRLLRPLPAEGPSIVIPRAPAMAVTKDNDATAATMSVRTRGEAAGDEPRPKLKPLHWDKVRTSSDRDMVWDRLKLDEDMIEVLFMNNSTAVAPRMDNPKKVGMPQFKQEERVLDPKKAQNIAILLRALNVTLEEVTDALLDGNAECLGAELLETLVKMAPTKEEELKLRDFTGDLSKLGSAERFLKAVLDIPFAFKRVDVMLYRANFENEVNYLRKSFQTLEAACDDLKGSRLFLKLLEAVLRTGNRMNVGTNRGEAKAFKLDTLLKLADVKGADGKTTLLHFVVQEIVRSEDAKSEKAPENHITNIAKVEQLRRQGLKVVSGLSTELGNVKRAATMDFDVLHGYVSKLEAGLGKIKSVLQLEKQCSQGVNFFATMREFLKEAEQEIEQVRHDEKAALGRVKEITEYFHGNAVKEEAHPLRIFMVVRDFLSMLDHVCREVSQQDRTFVGSARSFRISAANALPILNMQGQKGGRESSSDGDSPSM</sequence>
<organism>
    <name type="scientific">Oryza sativa subsp. japonica</name>
    <name type="common">Rice</name>
    <dbReference type="NCBI Taxonomy" id="39947"/>
    <lineage>
        <taxon>Eukaryota</taxon>
        <taxon>Viridiplantae</taxon>
        <taxon>Streptophyta</taxon>
        <taxon>Embryophyta</taxon>
        <taxon>Tracheophyta</taxon>
        <taxon>Spermatophyta</taxon>
        <taxon>Magnoliopsida</taxon>
        <taxon>Liliopsida</taxon>
        <taxon>Poales</taxon>
        <taxon>Poaceae</taxon>
        <taxon>BOP clade</taxon>
        <taxon>Oryzoideae</taxon>
        <taxon>Oryzeae</taxon>
        <taxon>Oryzinae</taxon>
        <taxon>Oryza</taxon>
        <taxon>Oryza sativa</taxon>
    </lineage>
</organism>
<gene>
    <name type="primary">FH4</name>
    <name type="ordered locus">Os10g0347800</name>
    <name type="ordered locus">LOC_Os10g20710</name>
    <name type="ORF">OSJNBb0078C13.8</name>
</gene>
<feature type="signal peptide" evidence="1">
    <location>
        <begin position="1"/>
        <end position="22"/>
    </location>
</feature>
<feature type="chain" id="PRO_0000318997" description="Formin-like protein 4">
    <location>
        <begin position="23"/>
        <end position="849"/>
    </location>
</feature>
<feature type="transmembrane region" description="Helical" evidence="1">
    <location>
        <begin position="109"/>
        <end position="129"/>
    </location>
</feature>
<feature type="domain" description="FH2" evidence="2">
    <location>
        <begin position="406"/>
        <end position="823"/>
    </location>
</feature>
<feature type="region of interest" description="Disordered" evidence="3">
    <location>
        <begin position="36"/>
        <end position="104"/>
    </location>
</feature>
<feature type="region of interest" description="Disordered" evidence="3">
    <location>
        <begin position="185"/>
        <end position="364"/>
    </location>
</feature>
<feature type="compositionally biased region" description="Pro residues" evidence="3">
    <location>
        <begin position="38"/>
        <end position="52"/>
    </location>
</feature>
<feature type="compositionally biased region" description="Low complexity" evidence="3">
    <location>
        <begin position="53"/>
        <end position="64"/>
    </location>
</feature>
<feature type="compositionally biased region" description="Basic and acidic residues" evidence="3">
    <location>
        <begin position="185"/>
        <end position="194"/>
    </location>
</feature>
<feature type="compositionally biased region" description="Gly residues" evidence="3">
    <location>
        <begin position="234"/>
        <end position="246"/>
    </location>
</feature>
<feature type="compositionally biased region" description="Low complexity" evidence="3">
    <location>
        <begin position="247"/>
        <end position="279"/>
    </location>
</feature>
<feature type="compositionally biased region" description="Pro residues" evidence="3">
    <location>
        <begin position="280"/>
        <end position="297"/>
    </location>
</feature>
<feature type="compositionally biased region" description="Pro residues" evidence="3">
    <location>
        <begin position="324"/>
        <end position="339"/>
    </location>
</feature>
<feature type="compositionally biased region" description="Pro residues" evidence="3">
    <location>
        <begin position="346"/>
        <end position="360"/>
    </location>
</feature>
<protein>
    <recommendedName>
        <fullName>Formin-like protein 4</fullName>
    </recommendedName>
    <alternativeName>
        <fullName>OsFH4</fullName>
    </alternativeName>
</protein>
<proteinExistence type="inferred from homology"/>
<dbReference type="EMBL" id="AC091666">
    <property type="protein sequence ID" value="AAN05367.1"/>
    <property type="molecule type" value="Genomic_DNA"/>
</dbReference>
<dbReference type="EMBL" id="DP000086">
    <property type="protein sequence ID" value="AAP53183.1"/>
    <property type="molecule type" value="Genomic_DNA"/>
</dbReference>
<dbReference type="EMBL" id="AP008216">
    <property type="protein sequence ID" value="BAF26316.1"/>
    <property type="molecule type" value="Genomic_DNA"/>
</dbReference>
<dbReference type="EMBL" id="AP014966">
    <property type="status" value="NOT_ANNOTATED_CDS"/>
    <property type="molecule type" value="Genomic_DNA"/>
</dbReference>
<dbReference type="SMR" id="Q8H8K7"/>
<dbReference type="FunCoup" id="Q8H8K7">
    <property type="interactions" value="96"/>
</dbReference>
<dbReference type="STRING" id="39947.Q8H8K7"/>
<dbReference type="PaxDb" id="39947-Q8H8K7"/>
<dbReference type="KEGG" id="dosa:Os10g0347800"/>
<dbReference type="eggNOG" id="KOG1922">
    <property type="taxonomic scope" value="Eukaryota"/>
</dbReference>
<dbReference type="InParanoid" id="Q8H8K7"/>
<dbReference type="Proteomes" id="UP000000763">
    <property type="component" value="Chromosome 10"/>
</dbReference>
<dbReference type="Proteomes" id="UP000059680">
    <property type="component" value="Chromosome 10"/>
</dbReference>
<dbReference type="GO" id="GO:0005856">
    <property type="term" value="C:cytoskeleton"/>
    <property type="evidence" value="ECO:0000318"/>
    <property type="project" value="GO_Central"/>
</dbReference>
<dbReference type="GO" id="GO:0016020">
    <property type="term" value="C:membrane"/>
    <property type="evidence" value="ECO:0007669"/>
    <property type="project" value="UniProtKB-SubCell"/>
</dbReference>
<dbReference type="GO" id="GO:0051015">
    <property type="term" value="F:actin filament binding"/>
    <property type="evidence" value="ECO:0000318"/>
    <property type="project" value="GO_Central"/>
</dbReference>
<dbReference type="GO" id="GO:0030036">
    <property type="term" value="P:actin cytoskeleton organization"/>
    <property type="evidence" value="ECO:0000318"/>
    <property type="project" value="GO_Central"/>
</dbReference>
<dbReference type="GO" id="GO:0045010">
    <property type="term" value="P:actin nucleation"/>
    <property type="evidence" value="ECO:0007669"/>
    <property type="project" value="InterPro"/>
</dbReference>
<dbReference type="Gene3D" id="1.20.58.2220">
    <property type="entry name" value="Formin, FH2 domain"/>
    <property type="match status" value="1"/>
</dbReference>
<dbReference type="InterPro" id="IPR015425">
    <property type="entry name" value="FH2_Formin"/>
</dbReference>
<dbReference type="InterPro" id="IPR042201">
    <property type="entry name" value="FH2_Formin_sf"/>
</dbReference>
<dbReference type="InterPro" id="IPR027643">
    <property type="entry name" value="Formin-like_plant"/>
</dbReference>
<dbReference type="PANTHER" id="PTHR23213:SF339">
    <property type="entry name" value="FORMIN-LIKE PROTEIN 4"/>
    <property type="match status" value="1"/>
</dbReference>
<dbReference type="PANTHER" id="PTHR23213">
    <property type="entry name" value="FORMIN-RELATED"/>
    <property type="match status" value="1"/>
</dbReference>
<dbReference type="Pfam" id="PF02181">
    <property type="entry name" value="FH2"/>
    <property type="match status" value="1"/>
</dbReference>
<dbReference type="SMART" id="SM00498">
    <property type="entry name" value="FH2"/>
    <property type="match status" value="1"/>
</dbReference>
<dbReference type="SUPFAM" id="SSF101447">
    <property type="entry name" value="Formin homology 2 domain (FH2 domain)"/>
    <property type="match status" value="1"/>
</dbReference>
<dbReference type="PROSITE" id="PS51444">
    <property type="entry name" value="FH2"/>
    <property type="match status" value="1"/>
</dbReference>
<evidence type="ECO:0000255" key="1"/>
<evidence type="ECO:0000255" key="2">
    <source>
        <dbReference type="PROSITE-ProRule" id="PRU00774"/>
    </source>
</evidence>
<evidence type="ECO:0000256" key="3">
    <source>
        <dbReference type="SAM" id="MobiDB-lite"/>
    </source>
</evidence>
<evidence type="ECO:0000305" key="4"/>